<protein>
    <recommendedName>
        <fullName evidence="1">Shikimate dehydrogenase (NADP(+))</fullName>
        <shortName evidence="1">SDH</shortName>
        <ecNumber evidence="1">1.1.1.25</ecNumber>
    </recommendedName>
</protein>
<name>AROE_STRZP</name>
<gene>
    <name evidence="1" type="primary">aroE</name>
    <name type="ordered locus">SPP_1396</name>
</gene>
<dbReference type="EC" id="1.1.1.25" evidence="1"/>
<dbReference type="EMBL" id="CP000920">
    <property type="protein sequence ID" value="ACO20473.1"/>
    <property type="molecule type" value="Genomic_DNA"/>
</dbReference>
<dbReference type="RefSeq" id="WP_000762500.1">
    <property type="nucleotide sequence ID" value="NC_012467.1"/>
</dbReference>
<dbReference type="SMR" id="C1CL85"/>
<dbReference type="KEGG" id="spp:SPP_1396"/>
<dbReference type="HOGENOM" id="CLU_044063_4_4_9"/>
<dbReference type="UniPathway" id="UPA00053">
    <property type="reaction ID" value="UER00087"/>
</dbReference>
<dbReference type="GO" id="GO:0050661">
    <property type="term" value="F:NADP binding"/>
    <property type="evidence" value="ECO:0007669"/>
    <property type="project" value="InterPro"/>
</dbReference>
<dbReference type="GO" id="GO:0004764">
    <property type="term" value="F:shikimate 3-dehydrogenase (NADP+) activity"/>
    <property type="evidence" value="ECO:0007669"/>
    <property type="project" value="UniProtKB-UniRule"/>
</dbReference>
<dbReference type="GO" id="GO:0008652">
    <property type="term" value="P:amino acid biosynthetic process"/>
    <property type="evidence" value="ECO:0007669"/>
    <property type="project" value="UniProtKB-KW"/>
</dbReference>
<dbReference type="GO" id="GO:0009073">
    <property type="term" value="P:aromatic amino acid family biosynthetic process"/>
    <property type="evidence" value="ECO:0007669"/>
    <property type="project" value="UniProtKB-KW"/>
</dbReference>
<dbReference type="GO" id="GO:0009423">
    <property type="term" value="P:chorismate biosynthetic process"/>
    <property type="evidence" value="ECO:0007669"/>
    <property type="project" value="UniProtKB-UniRule"/>
</dbReference>
<dbReference type="GO" id="GO:0019632">
    <property type="term" value="P:shikimate metabolic process"/>
    <property type="evidence" value="ECO:0007669"/>
    <property type="project" value="InterPro"/>
</dbReference>
<dbReference type="CDD" id="cd01065">
    <property type="entry name" value="NAD_bind_Shikimate_DH"/>
    <property type="match status" value="1"/>
</dbReference>
<dbReference type="FunFam" id="3.40.50.10860:FF:000004">
    <property type="entry name" value="Quinate/shikimate dehydrogenase"/>
    <property type="match status" value="1"/>
</dbReference>
<dbReference type="FunFam" id="3.40.50.720:FF:000505">
    <property type="entry name" value="Shikimate dehydrogenase (NADP(+))"/>
    <property type="match status" value="1"/>
</dbReference>
<dbReference type="Gene3D" id="3.40.50.10860">
    <property type="entry name" value="Leucine Dehydrogenase, chain A, domain 1"/>
    <property type="match status" value="1"/>
</dbReference>
<dbReference type="Gene3D" id="3.40.50.720">
    <property type="entry name" value="NAD(P)-binding Rossmann-like Domain"/>
    <property type="match status" value="1"/>
</dbReference>
<dbReference type="HAMAP" id="MF_00222">
    <property type="entry name" value="Shikimate_DH_AroE"/>
    <property type="match status" value="1"/>
</dbReference>
<dbReference type="InterPro" id="IPR046346">
    <property type="entry name" value="Aminoacid_DH-like_N_sf"/>
</dbReference>
<dbReference type="InterPro" id="IPR036291">
    <property type="entry name" value="NAD(P)-bd_dom_sf"/>
</dbReference>
<dbReference type="InterPro" id="IPR041121">
    <property type="entry name" value="SDH_C"/>
</dbReference>
<dbReference type="InterPro" id="IPR011342">
    <property type="entry name" value="Shikimate_DH"/>
</dbReference>
<dbReference type="InterPro" id="IPR013708">
    <property type="entry name" value="Shikimate_DH-bd_N"/>
</dbReference>
<dbReference type="InterPro" id="IPR022893">
    <property type="entry name" value="Shikimate_DH_fam"/>
</dbReference>
<dbReference type="NCBIfam" id="TIGR00507">
    <property type="entry name" value="aroE"/>
    <property type="match status" value="1"/>
</dbReference>
<dbReference type="NCBIfam" id="NF001315">
    <property type="entry name" value="PRK00258.2-4"/>
    <property type="match status" value="1"/>
</dbReference>
<dbReference type="PANTHER" id="PTHR21089:SF1">
    <property type="entry name" value="BIFUNCTIONAL 3-DEHYDROQUINATE DEHYDRATASE_SHIKIMATE DEHYDROGENASE, CHLOROPLASTIC"/>
    <property type="match status" value="1"/>
</dbReference>
<dbReference type="PANTHER" id="PTHR21089">
    <property type="entry name" value="SHIKIMATE DEHYDROGENASE"/>
    <property type="match status" value="1"/>
</dbReference>
<dbReference type="Pfam" id="PF18317">
    <property type="entry name" value="SDH_C"/>
    <property type="match status" value="1"/>
</dbReference>
<dbReference type="Pfam" id="PF08501">
    <property type="entry name" value="Shikimate_dh_N"/>
    <property type="match status" value="1"/>
</dbReference>
<dbReference type="SUPFAM" id="SSF53223">
    <property type="entry name" value="Aminoacid dehydrogenase-like, N-terminal domain"/>
    <property type="match status" value="1"/>
</dbReference>
<dbReference type="SUPFAM" id="SSF51735">
    <property type="entry name" value="NAD(P)-binding Rossmann-fold domains"/>
    <property type="match status" value="1"/>
</dbReference>
<accession>C1CL85</accession>
<proteinExistence type="inferred from homology"/>
<keyword id="KW-0028">Amino-acid biosynthesis</keyword>
<keyword id="KW-0057">Aromatic amino acid biosynthesis</keyword>
<keyword id="KW-0521">NADP</keyword>
<keyword id="KW-0560">Oxidoreductase</keyword>
<sequence length="284" mass="31314">MKLDGYTRLAAVVANPIKHSISPFIHNRAFEATDTNGAYVAWEIEASDLVETVANIRRYQMFGINLSMPYKEQVIPYLDKLSDEARLIGAVNTVVNENGNLIGYNTDGKGFFKCLPSFTISGKKMTLLGAGGAAKSILAQAILDGVSQISVFVRSVSMEKTRPYLDKLQEQTGFKVDLCALEYVSELQARIAESDLLVNATSVGMDGQSSPVPENIVLPETLLVADIIYQPFETPFLKWARSQGNPAVNGLGMLLYQAAEAFQLWTGKEMPTEEIWQSLTEKYQ</sequence>
<comment type="function">
    <text evidence="1">Involved in the biosynthesis of the chorismate, which leads to the biosynthesis of aromatic amino acids. Catalyzes the reversible NADPH linked reduction of 3-dehydroshikimate (DHSA) to yield shikimate (SA).</text>
</comment>
<comment type="catalytic activity">
    <reaction evidence="1">
        <text>shikimate + NADP(+) = 3-dehydroshikimate + NADPH + H(+)</text>
        <dbReference type="Rhea" id="RHEA:17737"/>
        <dbReference type="ChEBI" id="CHEBI:15378"/>
        <dbReference type="ChEBI" id="CHEBI:16630"/>
        <dbReference type="ChEBI" id="CHEBI:36208"/>
        <dbReference type="ChEBI" id="CHEBI:57783"/>
        <dbReference type="ChEBI" id="CHEBI:58349"/>
        <dbReference type="EC" id="1.1.1.25"/>
    </reaction>
</comment>
<comment type="pathway">
    <text evidence="1">Metabolic intermediate biosynthesis; chorismate biosynthesis; chorismate from D-erythrose 4-phosphate and phosphoenolpyruvate: step 4/7.</text>
</comment>
<comment type="subunit">
    <text evidence="1">Homodimer.</text>
</comment>
<comment type="similarity">
    <text evidence="1">Belongs to the shikimate dehydrogenase family.</text>
</comment>
<evidence type="ECO:0000255" key="1">
    <source>
        <dbReference type="HAMAP-Rule" id="MF_00222"/>
    </source>
</evidence>
<organism>
    <name type="scientific">Streptococcus pneumoniae (strain P1031)</name>
    <dbReference type="NCBI Taxonomy" id="488223"/>
    <lineage>
        <taxon>Bacteria</taxon>
        <taxon>Bacillati</taxon>
        <taxon>Bacillota</taxon>
        <taxon>Bacilli</taxon>
        <taxon>Lactobacillales</taxon>
        <taxon>Streptococcaceae</taxon>
        <taxon>Streptococcus</taxon>
    </lineage>
</organism>
<reference key="1">
    <citation type="journal article" date="2010" name="Genome Biol.">
        <title>Structure and dynamics of the pan-genome of Streptococcus pneumoniae and closely related species.</title>
        <authorList>
            <person name="Donati C."/>
            <person name="Hiller N.L."/>
            <person name="Tettelin H."/>
            <person name="Muzzi A."/>
            <person name="Croucher N.J."/>
            <person name="Angiuoli S.V."/>
            <person name="Oggioni M."/>
            <person name="Dunning Hotopp J.C."/>
            <person name="Hu F.Z."/>
            <person name="Riley D.R."/>
            <person name="Covacci A."/>
            <person name="Mitchell T.J."/>
            <person name="Bentley S.D."/>
            <person name="Kilian M."/>
            <person name="Ehrlich G.D."/>
            <person name="Rappuoli R."/>
            <person name="Moxon E.R."/>
            <person name="Masignani V."/>
        </authorList>
    </citation>
    <scope>NUCLEOTIDE SEQUENCE [LARGE SCALE GENOMIC DNA]</scope>
    <source>
        <strain>P1031</strain>
    </source>
</reference>
<feature type="chain" id="PRO_1000124899" description="Shikimate dehydrogenase (NADP(+))">
    <location>
        <begin position="1"/>
        <end position="284"/>
    </location>
</feature>
<feature type="active site" description="Proton acceptor" evidence="1">
    <location>
        <position position="71"/>
    </location>
</feature>
<feature type="binding site" evidence="1">
    <location>
        <begin position="20"/>
        <end position="22"/>
    </location>
    <ligand>
        <name>shikimate</name>
        <dbReference type="ChEBI" id="CHEBI:36208"/>
    </ligand>
</feature>
<feature type="binding site" evidence="1">
    <location>
        <position position="67"/>
    </location>
    <ligand>
        <name>shikimate</name>
        <dbReference type="ChEBI" id="CHEBI:36208"/>
    </ligand>
</feature>
<feature type="binding site" evidence="1">
    <location>
        <position position="83"/>
    </location>
    <ligand>
        <name>NADP(+)</name>
        <dbReference type="ChEBI" id="CHEBI:58349"/>
    </ligand>
</feature>
<feature type="binding site" evidence="1">
    <location>
        <position position="92"/>
    </location>
    <ligand>
        <name>shikimate</name>
        <dbReference type="ChEBI" id="CHEBI:36208"/>
    </ligand>
</feature>
<feature type="binding site" evidence="1">
    <location>
        <position position="107"/>
    </location>
    <ligand>
        <name>shikimate</name>
        <dbReference type="ChEBI" id="CHEBI:36208"/>
    </ligand>
</feature>
<feature type="binding site" evidence="1">
    <location>
        <begin position="129"/>
        <end position="133"/>
    </location>
    <ligand>
        <name>NADP(+)</name>
        <dbReference type="ChEBI" id="CHEBI:58349"/>
    </ligand>
</feature>
<feature type="binding site" evidence="1">
    <location>
        <position position="227"/>
    </location>
    <ligand>
        <name>NADP(+)</name>
        <dbReference type="ChEBI" id="CHEBI:58349"/>
    </ligand>
</feature>
<feature type="binding site" evidence="1">
    <location>
        <position position="229"/>
    </location>
    <ligand>
        <name>shikimate</name>
        <dbReference type="ChEBI" id="CHEBI:36208"/>
    </ligand>
</feature>
<feature type="binding site" evidence="1">
    <location>
        <position position="250"/>
    </location>
    <ligand>
        <name>NADP(+)</name>
        <dbReference type="ChEBI" id="CHEBI:58349"/>
    </ligand>
</feature>